<gene>
    <name type="primary">HSP90AB1</name>
    <name evidence="3" type="synonym">HSPC3</name>
    <name type="ORF">QccE-21185</name>
</gene>
<reference key="1">
    <citation type="submission" date="2005-06" db="EMBL/GenBank/DDBJ databases">
        <title>DNA sequences of macaque genes expressed in brain or testis and its evolutionary implications.</title>
        <authorList>
            <consortium name="International consortium for macaque cDNA sequencing and analysis"/>
        </authorList>
    </citation>
    <scope>NUCLEOTIDE SEQUENCE [LARGE SCALE MRNA]</scope>
    <source>
        <tissue>Brain cortex</tissue>
    </source>
</reference>
<feature type="chain" id="PRO_0000271477" description="Heat shock protein HSP 90-beta">
    <location>
        <begin position="1"/>
        <end position="724"/>
    </location>
</feature>
<feature type="region of interest" description="Interaction with TP53" evidence="3">
    <location>
        <begin position="1"/>
        <end position="527"/>
    </location>
</feature>
<feature type="region of interest" description="Interaction with BIRC2" evidence="3">
    <location>
        <begin position="1"/>
        <end position="214"/>
    </location>
</feature>
<feature type="region of interest" description="Interaction with NR3C1" evidence="4">
    <location>
        <begin position="9"/>
        <end position="231"/>
    </location>
</feature>
<feature type="region of interest" description="Interaction with AHSA1" evidence="3">
    <location>
        <begin position="215"/>
        <end position="552"/>
    </location>
</feature>
<feature type="region of interest" description="Disordered" evidence="7">
    <location>
        <begin position="222"/>
        <end position="270"/>
    </location>
</feature>
<feature type="region of interest" description="Interaction with NR3C1" evidence="4">
    <location>
        <begin position="264"/>
        <end position="608"/>
    </location>
</feature>
<feature type="region of interest" description="Interaction with NR1D1" evidence="4">
    <location>
        <begin position="620"/>
        <end position="723"/>
    </location>
</feature>
<feature type="region of interest" description="Disordered" evidence="7">
    <location>
        <begin position="695"/>
        <end position="724"/>
    </location>
</feature>
<feature type="short sequence motif" description="TPR repeat-binding">
    <location>
        <begin position="720"/>
        <end position="724"/>
    </location>
</feature>
<feature type="compositionally biased region" description="Acidic residues" evidence="7">
    <location>
        <begin position="225"/>
        <end position="244"/>
    </location>
</feature>
<feature type="binding site" evidence="1">
    <location>
        <position position="46"/>
    </location>
    <ligand>
        <name>ATP</name>
        <dbReference type="ChEBI" id="CHEBI:30616"/>
    </ligand>
</feature>
<feature type="binding site" evidence="1">
    <location>
        <position position="88"/>
    </location>
    <ligand>
        <name>ATP</name>
        <dbReference type="ChEBI" id="CHEBI:30616"/>
    </ligand>
</feature>
<feature type="binding site" evidence="1">
    <location>
        <position position="107"/>
    </location>
    <ligand>
        <name>ATP</name>
        <dbReference type="ChEBI" id="CHEBI:30616"/>
    </ligand>
</feature>
<feature type="binding site" evidence="1">
    <location>
        <position position="133"/>
    </location>
    <ligand>
        <name>ATP</name>
        <dbReference type="ChEBI" id="CHEBI:30616"/>
    </ligand>
</feature>
<feature type="binding site" evidence="1">
    <location>
        <position position="392"/>
    </location>
    <ligand>
        <name>ATP</name>
        <dbReference type="ChEBI" id="CHEBI:30616"/>
    </ligand>
</feature>
<feature type="site" description="Cleaved under oxidative stress" evidence="3">
    <location>
        <begin position="126"/>
        <end position="127"/>
    </location>
</feature>
<feature type="modified residue" description="N6-succinyllysine" evidence="4">
    <location>
        <position position="219"/>
    </location>
</feature>
<feature type="modified residue" description="Phosphoserine" evidence="3">
    <location>
        <position position="226"/>
    </location>
</feature>
<feature type="modified residue" description="Phosphoserine" evidence="3">
    <location>
        <position position="255"/>
    </location>
</feature>
<feature type="modified residue" description="Phosphoserine" evidence="4">
    <location>
        <position position="261"/>
    </location>
</feature>
<feature type="modified residue" description="Phosphothreonine" evidence="3">
    <location>
        <position position="297"/>
    </location>
</feature>
<feature type="modified residue" description="Phosphotyrosine" evidence="3">
    <location>
        <position position="301"/>
    </location>
</feature>
<feature type="modified residue" description="Phosphotyrosine" evidence="4">
    <location>
        <position position="305"/>
    </location>
</feature>
<feature type="modified residue" description="Phosphoserine" evidence="3">
    <location>
        <position position="307"/>
    </location>
</feature>
<feature type="modified residue" description="N6-malonyllysine" evidence="1">
    <location>
        <position position="399"/>
    </location>
</feature>
<feature type="modified residue" description="N6-acetyllysine" evidence="3">
    <location>
        <position position="435"/>
    </location>
</feature>
<feature type="modified residue" description="Phosphoserine" evidence="3">
    <location>
        <position position="445"/>
    </location>
</feature>
<feature type="modified residue" description="Phosphothreonine" evidence="3">
    <location>
        <position position="479"/>
    </location>
</feature>
<feature type="modified residue" description="N6-acetyllysine" evidence="3">
    <location>
        <position position="481"/>
    </location>
</feature>
<feature type="modified residue" description="Phosphotyrosine" evidence="4">
    <location>
        <position position="484"/>
    </location>
</feature>
<feature type="modified residue" description="N6-methylated lysine; alternate" evidence="3">
    <location>
        <position position="531"/>
    </location>
</feature>
<feature type="modified residue" description="N6-succinyllysine; alternate" evidence="4">
    <location>
        <position position="531"/>
    </location>
</feature>
<feature type="modified residue" description="N6-methylated lysine" evidence="3">
    <location>
        <position position="574"/>
    </location>
</feature>
<feature type="modified residue" description="N6-succinyllysine" evidence="4">
    <location>
        <position position="577"/>
    </location>
</feature>
<feature type="modified residue" description="S-nitrosocysteine" evidence="3">
    <location>
        <position position="590"/>
    </location>
</feature>
<feature type="modified residue" description="N6-acetyllysine" evidence="4">
    <location>
        <position position="624"/>
    </location>
</feature>
<feature type="modified residue" description="Phosphoserine" evidence="3">
    <location>
        <position position="669"/>
    </location>
</feature>
<feature type="modified residue" description="Phosphoserine; by PLK2 and PLK3" evidence="3">
    <location>
        <position position="718"/>
    </location>
</feature>
<feature type="glycosylation site" description="O-linked (GlcNAc) serine" evidence="1">
    <location>
        <position position="434"/>
    </location>
</feature>
<feature type="glycosylation site" description="O-linked (GlcNAc) serine" evidence="1">
    <location>
        <position position="452"/>
    </location>
</feature>
<protein>
    <recommendedName>
        <fullName>Heat shock protein HSP 90-beta</fullName>
    </recommendedName>
</protein>
<comment type="function">
    <text evidence="3">Molecular chaperone that promotes the maturation, structural maintenance and proper regulation of specific target proteins involved for instance in cell cycle control and signal transduction. Undergoes a functional cycle linked to its ATPase activity. This cycle probably induces conformational changes in the client proteins, thereby causing their activation. Interacts dynamically with various co-chaperones that modulate its substrate recognition, ATPase cycle and chaperone function. Engages with a range of client protein classes via its interaction with various co-chaperone proteins or complexes, that act as adapters, simultaneously able to interact with the specific client and the central chaperone itself. Recruitment of ATP and co-chaperone followed by client protein forms a functional chaperone. After the completion of the chaperoning process, properly folded client protein and co-chaperone leave HSP90 in an ADP-bound partially open conformation and finally, ADP is released from HSP90 which acquires an open conformation for the next cycle. Apart from its chaperone activity, it also plays a role in the regulation of the transcription machinery. HSP90 and its co-chaperones modulate transcription at least at three different levels. They first alter the steady-state levels of certain transcription factors in response to various physiological cues. Second, they modulate the activity of certain epigenetic modifiers, such as histone deacetylases or DNA methyl transferases, and thereby respond to the change in the environment. Third, they participate in the eviction of histones from the promoter region of certain genes and thereby turn on gene expression. Antagonizes STUB1-mediated inhibition of TGF-beta signaling via inhibition of STUB1-mediated SMAD3 ubiquitination and degradation. Promotes cell differentiation by chaperoning BIRC2 and thereby protecting from auto-ubiquitination and degradation by the proteasomal machinery. Main chaperone involved in the phosphorylation/activation of the STAT1 by chaperoning both JAK2 and PRKCE under heat shock and in turn, activates its own transcription. Involved in the translocation into ERGIC (endoplasmic reticulum-Golgi intermediate compartment) of leaderless cargos (lacking the secretion signal sequence) such as the interleukin 1/IL-1; the translocation process is mediated by the cargo receptor TMED10.</text>
</comment>
<comment type="activity regulation">
    <text evidence="3">In the resting state, through the dimerization of its C-terminal domain, HSP90 forms a homodimer which is defined as the open conformation. Upon ATP-binding, the N-terminal domain undergoes significant conformational changes and comes in contact to form an active closed conformation. After HSP90 finishes its chaperoning tasks of assisting the proper folding, stabilization and activation of client proteins under the active state, ATP molecule is hydrolyzed to ADP which then dissociates from HSP90 and directs the protein back to the resting state.</text>
</comment>
<comment type="subunit">
    <text evidence="3 4 5">Monomer. Homodimer (By similarity). Forms a complex with CDK6 and CDC37. Interacts with UNC45A; binding to UNC45A involves 2 UNC45A monomers per HSP90AB1 dimer (By similarity). Interacts with CHORDC1 (By similarity). Interacts with DNAJC7. Interacts with FKBP4. May interact with NWD1. Interacts with SGTA. Interacts with HSF1 in an ATP-dependent manner. Interacts with MET; the interaction suppresses MET kinase activity. Interacts with ERBB2 in an ATP-dependent manner; the interaction suppresses ERBB2 kinase activity. Interacts with HIF1A, KEAP1 and RHOBTB2. Interacts with STUB1 and SMAD3. Interacts with XPO1 and AHSA1. Interacts with BIRC2. Interacts with KCNQ4; promotes cell surface expression of KCNQ4. Interacts with BIRC2; prevents auto-ubiquitination and degradation of its client protein BIRC2. Interacts with NOS3. Interacts with AHR; interaction is inhibited by HSP90AB1 phosphorylation on Ser-226 and Ser-255. Interacts with STIP1 and CDC37; upon SMYD2-dependent methylation. Interacts with JAK2 and PRKCE; promotes functional activation in a heat shock-dependent manner. Interacts with HSP90AA1; interaction is constitutive. HSP90AB1-CDC37 chaperone complex interacts with inactive MAPK7 (via N-terminal half) in resting cells; the interaction is MAP2K5-independent and prevents from ubiquitination and proteasomal degradation. Interacts with CDC25A; prevents heat shock-mediated CDC25A degradation and contributes to cell cycle progression. Interacts with TP53 (via DNA binding domain); suppresses TP53 aggregation and prevents from irreversible thermal inactivation. Interacts with TGFB1 processed form (LAP); inhibits latent TGFB1 activation (By similarity). Interacts with TRIM8; prevents nucleus translocation of phosphorylated STAT3 and HSP90AB1 (By similarity). Interacts with NR3C1 (via domain NR LBD) and NR1D1 (via domain NR LBD) (By similarity). Interacts with PDCL3 (By similarity). Interacts with TTC4 (via TPR repeats) (By similarity). Interacts with IL1B; the interaction facilitates cargo translocation into the ERGIC (By similarity).</text>
</comment>
<comment type="subcellular location">
    <subcellularLocation>
        <location evidence="3">Cytoplasm</location>
    </subcellularLocation>
    <subcellularLocation>
        <location evidence="3">Melanosome</location>
    </subcellularLocation>
    <subcellularLocation>
        <location evidence="3">Nucleus</location>
    </subcellularLocation>
    <subcellularLocation>
        <location evidence="3">Secreted</location>
    </subcellularLocation>
    <subcellularLocation>
        <location evidence="3">Cell membrane</location>
    </subcellularLocation>
    <subcellularLocation>
        <location evidence="6">Dynein axonemal particle</location>
    </subcellularLocation>
    <text evidence="3">Translocates with BIRC2 from the nucleus to the cytoplasm during differentiation. Secreted when associated with TGFB1 processed form (LAP).</text>
</comment>
<comment type="domain">
    <text evidence="2">The TPR repeat-binding motif mediates interaction with TPR repeat-containing proteins.</text>
</comment>
<comment type="PTM">
    <text evidence="3">Ubiquitinated in the presence of STUB1-UBE2D1 complex (in vitro).</text>
</comment>
<comment type="PTM">
    <text evidence="3">ISGylated.</text>
</comment>
<comment type="PTM">
    <text evidence="3">S-nitrosylated; negatively regulates the ATPase activity.</text>
</comment>
<comment type="PTM">
    <text evidence="3">Phosphorylation at Tyr-301 by SRC is induced by lipopolysaccharide. Phosphorylation at Ser-226 and Ser-255 inhibits AHR interaction.</text>
</comment>
<comment type="PTM">
    <text evidence="3">Methylated by SMYD2; facilitates dimerization and chaperone complex formation; promotes cancer cell proliferation.</text>
</comment>
<comment type="PTM">
    <text evidence="3">Cleaved following oxidative stress resulting in HSP90AB1 protein radicals formation; disrupts the chaperoning function and the degradation of its client proteins.</text>
</comment>
<comment type="similarity">
    <text evidence="8">Belongs to the heat shock protein 90 family.</text>
</comment>
<keyword id="KW-0007">Acetylation</keyword>
<keyword id="KW-0067">ATP-binding</keyword>
<keyword id="KW-1003">Cell membrane</keyword>
<keyword id="KW-0143">Chaperone</keyword>
<keyword id="KW-0963">Cytoplasm</keyword>
<keyword id="KW-0325">Glycoprotein</keyword>
<keyword id="KW-0472">Membrane</keyword>
<keyword id="KW-0488">Methylation</keyword>
<keyword id="KW-0547">Nucleotide-binding</keyword>
<keyword id="KW-0539">Nucleus</keyword>
<keyword id="KW-0597">Phosphoprotein</keyword>
<keyword id="KW-1185">Reference proteome</keyword>
<keyword id="KW-0702">S-nitrosylation</keyword>
<keyword id="KW-0964">Secreted</keyword>
<keyword id="KW-0346">Stress response</keyword>
<keyword id="KW-0832">Ubl conjugation</keyword>
<sequence length="724" mass="83237">MPEEVHHGEEEVETFAFQAEIAQLMSLIINTFYSNKEIFLRELISNASDALDKIRYESLTDPSKLDSGKELKIDIIPNPQERTLTLVDTGIGMTKADLINNLGTIAKSGTKAFMEALQAGADISMIGQFGVGFYSAYLVAEKVVVITKHNDDEQYAWESSAGGSFTVRADHGEPIGRGTKVILHLKEDQTEYLEERRVKEVVKKHSQFIGYPITLYLEKEREKEISDDEAEEEKGEKEEEDKDDEEKPKIEDVGSDEEDDSGKDKKKKTKKIKEKYIDQEELNKTKPIWTRNPDDITQEEYGEFYKSLTNDWEDHLAVKHFSVEGQLEFRALLFIPRRAPFDLFENKKKKNNIKLYVRRVFIMDSCDELIPEYLNFIRGVVDSEDLPLNISREMLQQSKILKVIRKNIVKKCLELFSELAEDKENYKKFYEAFSKNLKLGIHEDSTNRRRLSELLRYHTSQSGDEMTSLSEYVSRMKETQKSIYYITGESKEQVANSAFVERVRKRGFEVVYMTEPIDEYCVQQLKEFDGKSLVSVTKEGLELPEDEEEKKKMEESKAKFENLCKLMKEILDKKVEKVTISNRLVSSPCCIVTSTYGWTANMERIMKAQALRDNSTMGYMMAKKHLEINPDHPIVETLRQKAEADKNDKAVKDLVVLLFETALLSSGFSLEDPQTHSNRIYRMIKLGLGIDEDEVAAEEPSAAVPDEIPPLEGDEDASRMEEVD</sequence>
<evidence type="ECO:0000250" key="1"/>
<evidence type="ECO:0000250" key="2">
    <source>
        <dbReference type="UniProtKB" id="P07900"/>
    </source>
</evidence>
<evidence type="ECO:0000250" key="3">
    <source>
        <dbReference type="UniProtKB" id="P08238"/>
    </source>
</evidence>
<evidence type="ECO:0000250" key="4">
    <source>
        <dbReference type="UniProtKB" id="P11499"/>
    </source>
</evidence>
<evidence type="ECO:0000250" key="5">
    <source>
        <dbReference type="UniProtKB" id="P34058"/>
    </source>
</evidence>
<evidence type="ECO:0000250" key="6">
    <source>
        <dbReference type="UniProtKB" id="Q6AZV1"/>
    </source>
</evidence>
<evidence type="ECO:0000256" key="7">
    <source>
        <dbReference type="SAM" id="MobiDB-lite"/>
    </source>
</evidence>
<evidence type="ECO:0000305" key="8"/>
<organism>
    <name type="scientific">Macaca fascicularis</name>
    <name type="common">Crab-eating macaque</name>
    <name type="synonym">Cynomolgus monkey</name>
    <dbReference type="NCBI Taxonomy" id="9541"/>
    <lineage>
        <taxon>Eukaryota</taxon>
        <taxon>Metazoa</taxon>
        <taxon>Chordata</taxon>
        <taxon>Craniata</taxon>
        <taxon>Vertebrata</taxon>
        <taxon>Euteleostomi</taxon>
        <taxon>Mammalia</taxon>
        <taxon>Eutheria</taxon>
        <taxon>Euarchontoglires</taxon>
        <taxon>Primates</taxon>
        <taxon>Haplorrhini</taxon>
        <taxon>Catarrhini</taxon>
        <taxon>Cercopithecidae</taxon>
        <taxon>Cercopithecinae</taxon>
        <taxon>Macaca</taxon>
    </lineage>
</organism>
<dbReference type="EMBL" id="AB169809">
    <property type="protein sequence ID" value="BAE01890.1"/>
    <property type="molecule type" value="mRNA"/>
</dbReference>
<dbReference type="RefSeq" id="XP_005552913.2">
    <property type="nucleotide sequence ID" value="XM_005552856.2"/>
</dbReference>
<dbReference type="RefSeq" id="XP_005552914.1">
    <property type="nucleotide sequence ID" value="XM_005552857.3"/>
</dbReference>
<dbReference type="RefSeq" id="XP_005552915.1">
    <property type="nucleotide sequence ID" value="XM_005552858.2"/>
</dbReference>
<dbReference type="RefSeq" id="XP_045246920.1">
    <property type="nucleotide sequence ID" value="XM_045390985.2"/>
</dbReference>
<dbReference type="SMR" id="Q4R4T5"/>
<dbReference type="STRING" id="9541.ENSMFAP00000038693"/>
<dbReference type="GlyCosmos" id="Q4R4T5">
    <property type="glycosylation" value="2 sites, No reported glycans"/>
</dbReference>
<dbReference type="GeneID" id="101926380"/>
<dbReference type="CTD" id="3326"/>
<dbReference type="VEuPathDB" id="HostDB:ENSMFAG00000038525"/>
<dbReference type="eggNOG" id="KOG0019">
    <property type="taxonomic scope" value="Eukaryota"/>
</dbReference>
<dbReference type="OMA" id="TRMKAEQ"/>
<dbReference type="Proteomes" id="UP000233100">
    <property type="component" value="Chromosome 4"/>
</dbReference>
<dbReference type="GO" id="GO:0034751">
    <property type="term" value="C:aryl hydrocarbon receptor complex"/>
    <property type="evidence" value="ECO:0000250"/>
    <property type="project" value="UniProtKB"/>
</dbReference>
<dbReference type="GO" id="GO:0005737">
    <property type="term" value="C:cytoplasm"/>
    <property type="evidence" value="ECO:0000250"/>
    <property type="project" value="UniProtKB"/>
</dbReference>
<dbReference type="GO" id="GO:0120293">
    <property type="term" value="C:dynein axonemal particle"/>
    <property type="evidence" value="ECO:0000250"/>
    <property type="project" value="UniProtKB"/>
</dbReference>
<dbReference type="GO" id="GO:0005576">
    <property type="term" value="C:extracellular region"/>
    <property type="evidence" value="ECO:0000250"/>
    <property type="project" value="UniProtKB"/>
</dbReference>
<dbReference type="GO" id="GO:0042470">
    <property type="term" value="C:melanosome"/>
    <property type="evidence" value="ECO:0007669"/>
    <property type="project" value="UniProtKB-SubCell"/>
</dbReference>
<dbReference type="GO" id="GO:0005634">
    <property type="term" value="C:nucleus"/>
    <property type="evidence" value="ECO:0000250"/>
    <property type="project" value="UniProtKB"/>
</dbReference>
<dbReference type="GO" id="GO:0005886">
    <property type="term" value="C:plasma membrane"/>
    <property type="evidence" value="ECO:0007669"/>
    <property type="project" value="UniProtKB-SubCell"/>
</dbReference>
<dbReference type="GO" id="GO:0005524">
    <property type="term" value="F:ATP binding"/>
    <property type="evidence" value="ECO:0007669"/>
    <property type="project" value="UniProtKB-KW"/>
</dbReference>
<dbReference type="GO" id="GO:0016887">
    <property type="term" value="F:ATP hydrolysis activity"/>
    <property type="evidence" value="ECO:0007669"/>
    <property type="project" value="InterPro"/>
</dbReference>
<dbReference type="GO" id="GO:0140662">
    <property type="term" value="F:ATP-dependent protein folding chaperone"/>
    <property type="evidence" value="ECO:0007669"/>
    <property type="project" value="InterPro"/>
</dbReference>
<dbReference type="GO" id="GO:0046983">
    <property type="term" value="F:protein dimerization activity"/>
    <property type="evidence" value="ECO:0000250"/>
    <property type="project" value="UniProtKB"/>
</dbReference>
<dbReference type="GO" id="GO:0141069">
    <property type="term" value="F:receptor ligand inhibitor activity"/>
    <property type="evidence" value="ECO:0000250"/>
    <property type="project" value="UniProtKB"/>
</dbReference>
<dbReference type="GO" id="GO:0051082">
    <property type="term" value="F:unfolded protein binding"/>
    <property type="evidence" value="ECO:0007669"/>
    <property type="project" value="InterPro"/>
</dbReference>
<dbReference type="GO" id="GO:0032435">
    <property type="term" value="P:negative regulation of proteasomal ubiquitin-dependent protein catabolic process"/>
    <property type="evidence" value="ECO:0000250"/>
    <property type="project" value="UniProtKB"/>
</dbReference>
<dbReference type="GO" id="GO:0030511">
    <property type="term" value="P:positive regulation of transforming growth factor beta receptor signaling pathway"/>
    <property type="evidence" value="ECO:0000250"/>
    <property type="project" value="UniProtKB"/>
</dbReference>
<dbReference type="GO" id="GO:0051726">
    <property type="term" value="P:regulation of cell cycle"/>
    <property type="evidence" value="ECO:0000250"/>
    <property type="project" value="UniProtKB"/>
</dbReference>
<dbReference type="CDD" id="cd16927">
    <property type="entry name" value="HATPase_Hsp90-like"/>
    <property type="match status" value="1"/>
</dbReference>
<dbReference type="FunFam" id="1.20.120.790:FF:000001">
    <property type="entry name" value="Heat shock protein 90 alpha"/>
    <property type="match status" value="1"/>
</dbReference>
<dbReference type="FunFam" id="3.30.230.80:FF:000001">
    <property type="entry name" value="Heat shock protein 90 alpha"/>
    <property type="match status" value="1"/>
</dbReference>
<dbReference type="FunFam" id="3.40.50.11260:FF:000001">
    <property type="entry name" value="Heat shock protein 90 alpha"/>
    <property type="match status" value="1"/>
</dbReference>
<dbReference type="FunFam" id="3.30.565.10:FF:000204">
    <property type="entry name" value="Heat shock protein HSP 90-beta"/>
    <property type="match status" value="1"/>
</dbReference>
<dbReference type="Gene3D" id="3.30.230.80">
    <property type="match status" value="1"/>
</dbReference>
<dbReference type="Gene3D" id="3.40.50.11260">
    <property type="match status" value="1"/>
</dbReference>
<dbReference type="Gene3D" id="1.20.120.790">
    <property type="entry name" value="Heat shock protein 90, C-terminal domain"/>
    <property type="match status" value="1"/>
</dbReference>
<dbReference type="Gene3D" id="3.30.565.10">
    <property type="entry name" value="Histidine kinase-like ATPase, C-terminal domain"/>
    <property type="match status" value="1"/>
</dbReference>
<dbReference type="HAMAP" id="MF_00505">
    <property type="entry name" value="HSP90"/>
    <property type="match status" value="1"/>
</dbReference>
<dbReference type="InterPro" id="IPR036890">
    <property type="entry name" value="HATPase_C_sf"/>
</dbReference>
<dbReference type="InterPro" id="IPR019805">
    <property type="entry name" value="Heat_shock_protein_90_CS"/>
</dbReference>
<dbReference type="InterPro" id="IPR037196">
    <property type="entry name" value="HSP90_C"/>
</dbReference>
<dbReference type="InterPro" id="IPR001404">
    <property type="entry name" value="Hsp90_fam"/>
</dbReference>
<dbReference type="InterPro" id="IPR020575">
    <property type="entry name" value="Hsp90_N"/>
</dbReference>
<dbReference type="InterPro" id="IPR020568">
    <property type="entry name" value="Ribosomal_Su5_D2-typ_SF"/>
</dbReference>
<dbReference type="NCBIfam" id="NF003555">
    <property type="entry name" value="PRK05218.1"/>
    <property type="match status" value="1"/>
</dbReference>
<dbReference type="PANTHER" id="PTHR11528">
    <property type="entry name" value="HEAT SHOCK PROTEIN 90 FAMILY MEMBER"/>
    <property type="match status" value="1"/>
</dbReference>
<dbReference type="Pfam" id="PF13589">
    <property type="entry name" value="HATPase_c_3"/>
    <property type="match status" value="1"/>
</dbReference>
<dbReference type="Pfam" id="PF00183">
    <property type="entry name" value="HSP90"/>
    <property type="match status" value="1"/>
</dbReference>
<dbReference type="PIRSF" id="PIRSF002583">
    <property type="entry name" value="Hsp90"/>
    <property type="match status" value="1"/>
</dbReference>
<dbReference type="PRINTS" id="PR00775">
    <property type="entry name" value="HEATSHOCK90"/>
</dbReference>
<dbReference type="SMART" id="SM00387">
    <property type="entry name" value="HATPase_c"/>
    <property type="match status" value="1"/>
</dbReference>
<dbReference type="SUPFAM" id="SSF55874">
    <property type="entry name" value="ATPase domain of HSP90 chaperone/DNA topoisomerase II/histidine kinase"/>
    <property type="match status" value="1"/>
</dbReference>
<dbReference type="SUPFAM" id="SSF110942">
    <property type="entry name" value="HSP90 C-terminal domain"/>
    <property type="match status" value="1"/>
</dbReference>
<dbReference type="SUPFAM" id="SSF54211">
    <property type="entry name" value="Ribosomal protein S5 domain 2-like"/>
    <property type="match status" value="1"/>
</dbReference>
<dbReference type="PROSITE" id="PS00298">
    <property type="entry name" value="HSP90"/>
    <property type="match status" value="1"/>
</dbReference>
<accession>Q4R4T5</accession>
<proteinExistence type="evidence at transcript level"/>
<name>HS90B_MACFA</name>